<sequence length="154" mass="17292">MGYGKILVALDRSELAKEVLQQAIALGQKESSQLMVFYCIPVDSQDLSIYPSFYGEAAIGFSQIIKEHLEEQQTEAREWLQSIVQQVQEDGVACEWDVKVGEPGRWIRDMAKNWDADLVVLGRRGLKGLAEVFLGSVSSYVIHHVQCSVLIVQH</sequence>
<keyword id="KW-1185">Reference proteome</keyword>
<evidence type="ECO:0000305" key="1"/>
<accession>P74148</accession>
<organism>
    <name type="scientific">Synechocystis sp. (strain ATCC 27184 / PCC 6803 / Kazusa)</name>
    <dbReference type="NCBI Taxonomy" id="1111708"/>
    <lineage>
        <taxon>Bacteria</taxon>
        <taxon>Bacillati</taxon>
        <taxon>Cyanobacteriota</taxon>
        <taxon>Cyanophyceae</taxon>
        <taxon>Synechococcales</taxon>
        <taxon>Merismopediaceae</taxon>
        <taxon>Synechocystis</taxon>
    </lineage>
</organism>
<name>Y1388_SYNY3</name>
<reference key="1">
    <citation type="journal article" date="1996" name="DNA Res.">
        <title>Sequence analysis of the genome of the unicellular cyanobacterium Synechocystis sp. strain PCC6803. II. Sequence determination of the entire genome and assignment of potential protein-coding regions.</title>
        <authorList>
            <person name="Kaneko T."/>
            <person name="Sato S."/>
            <person name="Kotani H."/>
            <person name="Tanaka A."/>
            <person name="Asamizu E."/>
            <person name="Nakamura Y."/>
            <person name="Miyajima N."/>
            <person name="Hirosawa M."/>
            <person name="Sugiura M."/>
            <person name="Sasamoto S."/>
            <person name="Kimura T."/>
            <person name="Hosouchi T."/>
            <person name="Matsuno A."/>
            <person name="Muraki A."/>
            <person name="Nakazaki N."/>
            <person name="Naruo K."/>
            <person name="Okumura S."/>
            <person name="Shimpo S."/>
            <person name="Takeuchi C."/>
            <person name="Wada T."/>
            <person name="Watanabe A."/>
            <person name="Yamada M."/>
            <person name="Yasuda M."/>
            <person name="Tabata S."/>
        </authorList>
    </citation>
    <scope>NUCLEOTIDE SEQUENCE [LARGE SCALE GENOMIC DNA]</scope>
    <source>
        <strain>ATCC 27184 / PCC 6803 / Kazusa</strain>
    </source>
</reference>
<feature type="chain" id="PRO_0000147441" description="Universal stress protein Sll1388">
    <location>
        <begin position="1"/>
        <end position="154"/>
    </location>
</feature>
<dbReference type="EMBL" id="BA000022">
    <property type="protein sequence ID" value="BAA18235.1"/>
    <property type="molecule type" value="Genomic_DNA"/>
</dbReference>
<dbReference type="PIR" id="S75674">
    <property type="entry name" value="S75674"/>
</dbReference>
<dbReference type="SMR" id="P74148"/>
<dbReference type="FunCoup" id="P74148">
    <property type="interactions" value="109"/>
</dbReference>
<dbReference type="STRING" id="1148.gene:10499108"/>
<dbReference type="PaxDb" id="1148-1653320"/>
<dbReference type="EnsemblBacteria" id="BAA18235">
    <property type="protein sequence ID" value="BAA18235"/>
    <property type="gene ID" value="BAA18235"/>
</dbReference>
<dbReference type="KEGG" id="syn:sll1388"/>
<dbReference type="eggNOG" id="COG0589">
    <property type="taxonomic scope" value="Bacteria"/>
</dbReference>
<dbReference type="InParanoid" id="P74148"/>
<dbReference type="PhylomeDB" id="P74148"/>
<dbReference type="Proteomes" id="UP000001425">
    <property type="component" value="Chromosome"/>
</dbReference>
<dbReference type="CDD" id="cd00293">
    <property type="entry name" value="USP-like"/>
    <property type="match status" value="1"/>
</dbReference>
<dbReference type="Gene3D" id="3.40.50.620">
    <property type="entry name" value="HUPs"/>
    <property type="match status" value="1"/>
</dbReference>
<dbReference type="InterPro" id="IPR014729">
    <property type="entry name" value="Rossmann-like_a/b/a_fold"/>
</dbReference>
<dbReference type="InterPro" id="IPR006015">
    <property type="entry name" value="Universal_stress_UspA"/>
</dbReference>
<dbReference type="InterPro" id="IPR006016">
    <property type="entry name" value="UspA"/>
</dbReference>
<dbReference type="PANTHER" id="PTHR46268">
    <property type="entry name" value="STRESS RESPONSE PROTEIN NHAX"/>
    <property type="match status" value="1"/>
</dbReference>
<dbReference type="PANTHER" id="PTHR46268:SF8">
    <property type="entry name" value="UNIVERSAL STRESS PROTEIN SLL1388"/>
    <property type="match status" value="1"/>
</dbReference>
<dbReference type="Pfam" id="PF00582">
    <property type="entry name" value="Usp"/>
    <property type="match status" value="1"/>
</dbReference>
<dbReference type="PRINTS" id="PR01438">
    <property type="entry name" value="UNVRSLSTRESS"/>
</dbReference>
<dbReference type="SUPFAM" id="SSF52402">
    <property type="entry name" value="Adenine nucleotide alpha hydrolases-like"/>
    <property type="match status" value="1"/>
</dbReference>
<gene>
    <name type="ordered locus">sll1388</name>
</gene>
<protein>
    <recommendedName>
        <fullName>Universal stress protein Sll1388</fullName>
        <shortName>USP Sll1388</shortName>
    </recommendedName>
</protein>
<comment type="similarity">
    <text evidence="1">Belongs to the universal stress protein A family.</text>
</comment>
<proteinExistence type="inferred from homology"/>